<comment type="function">
    <text evidence="1">Binds to the 23S rRNA.</text>
</comment>
<comment type="similarity">
    <text evidence="1">Belongs to the bacterial ribosomal protein bL9 family.</text>
</comment>
<gene>
    <name evidence="1" type="primary">rplI</name>
    <name type="ordered locus">AM162</name>
</gene>
<dbReference type="EMBL" id="CP000030">
    <property type="protein sequence ID" value="AAV86300.1"/>
    <property type="molecule type" value="Genomic_DNA"/>
</dbReference>
<dbReference type="RefSeq" id="WP_011114147.1">
    <property type="nucleotide sequence ID" value="NC_004842.2"/>
</dbReference>
<dbReference type="SMR" id="Q5PBM9"/>
<dbReference type="KEGG" id="ama:AM162"/>
<dbReference type="HOGENOM" id="CLU_078938_1_1_5"/>
<dbReference type="GO" id="GO:1990904">
    <property type="term" value="C:ribonucleoprotein complex"/>
    <property type="evidence" value="ECO:0007669"/>
    <property type="project" value="UniProtKB-KW"/>
</dbReference>
<dbReference type="GO" id="GO:0005840">
    <property type="term" value="C:ribosome"/>
    <property type="evidence" value="ECO:0007669"/>
    <property type="project" value="UniProtKB-KW"/>
</dbReference>
<dbReference type="GO" id="GO:0019843">
    <property type="term" value="F:rRNA binding"/>
    <property type="evidence" value="ECO:0007669"/>
    <property type="project" value="UniProtKB-UniRule"/>
</dbReference>
<dbReference type="GO" id="GO:0003735">
    <property type="term" value="F:structural constituent of ribosome"/>
    <property type="evidence" value="ECO:0007669"/>
    <property type="project" value="InterPro"/>
</dbReference>
<dbReference type="GO" id="GO:0006412">
    <property type="term" value="P:translation"/>
    <property type="evidence" value="ECO:0007669"/>
    <property type="project" value="UniProtKB-UniRule"/>
</dbReference>
<dbReference type="Gene3D" id="3.10.430.100">
    <property type="entry name" value="Ribosomal protein L9, C-terminal domain"/>
    <property type="match status" value="1"/>
</dbReference>
<dbReference type="Gene3D" id="3.40.5.10">
    <property type="entry name" value="Ribosomal protein L9, N-terminal domain"/>
    <property type="match status" value="1"/>
</dbReference>
<dbReference type="HAMAP" id="MF_00503">
    <property type="entry name" value="Ribosomal_bL9"/>
    <property type="match status" value="1"/>
</dbReference>
<dbReference type="InterPro" id="IPR000244">
    <property type="entry name" value="Ribosomal_bL9"/>
</dbReference>
<dbReference type="InterPro" id="IPR009027">
    <property type="entry name" value="Ribosomal_bL9/RNase_H1_N"/>
</dbReference>
<dbReference type="InterPro" id="IPR020594">
    <property type="entry name" value="Ribosomal_bL9_bac/chp"/>
</dbReference>
<dbReference type="InterPro" id="IPR020069">
    <property type="entry name" value="Ribosomal_bL9_C"/>
</dbReference>
<dbReference type="InterPro" id="IPR036791">
    <property type="entry name" value="Ribosomal_bL9_C_sf"/>
</dbReference>
<dbReference type="InterPro" id="IPR020070">
    <property type="entry name" value="Ribosomal_bL9_N"/>
</dbReference>
<dbReference type="InterPro" id="IPR036935">
    <property type="entry name" value="Ribosomal_bL9_N_sf"/>
</dbReference>
<dbReference type="NCBIfam" id="TIGR00158">
    <property type="entry name" value="L9"/>
    <property type="match status" value="1"/>
</dbReference>
<dbReference type="PANTHER" id="PTHR21368">
    <property type="entry name" value="50S RIBOSOMAL PROTEIN L9"/>
    <property type="match status" value="1"/>
</dbReference>
<dbReference type="Pfam" id="PF03948">
    <property type="entry name" value="Ribosomal_L9_C"/>
    <property type="match status" value="1"/>
</dbReference>
<dbReference type="Pfam" id="PF01281">
    <property type="entry name" value="Ribosomal_L9_N"/>
    <property type="match status" value="1"/>
</dbReference>
<dbReference type="SUPFAM" id="SSF55658">
    <property type="entry name" value="L9 N-domain-like"/>
    <property type="match status" value="1"/>
</dbReference>
<dbReference type="SUPFAM" id="SSF55653">
    <property type="entry name" value="Ribosomal protein L9 C-domain"/>
    <property type="match status" value="1"/>
</dbReference>
<name>RL9_ANAMM</name>
<keyword id="KW-0687">Ribonucleoprotein</keyword>
<keyword id="KW-0689">Ribosomal protein</keyword>
<keyword id="KW-0694">RNA-binding</keyword>
<keyword id="KW-0699">rRNA-binding</keyword>
<accession>Q5PBM9</accession>
<protein>
    <recommendedName>
        <fullName evidence="1">Large ribosomal subunit protein bL9</fullName>
    </recommendedName>
    <alternativeName>
        <fullName evidence="3">50S ribosomal protein L9</fullName>
    </alternativeName>
</protein>
<proteinExistence type="inferred from homology"/>
<feature type="chain" id="PRO_0000258441" description="Large ribosomal subunit protein bL9">
    <location>
        <begin position="1"/>
        <end position="220"/>
    </location>
</feature>
<feature type="region of interest" description="Disordered" evidence="2">
    <location>
        <begin position="167"/>
        <end position="220"/>
    </location>
</feature>
<feature type="compositionally biased region" description="Low complexity" evidence="2">
    <location>
        <begin position="167"/>
        <end position="184"/>
    </location>
</feature>
<reference key="1">
    <citation type="journal article" date="2005" name="Proc. Natl. Acad. Sci. U.S.A.">
        <title>Complete genome sequencing of Anaplasma marginale reveals that the surface is skewed to two superfamilies of outer membrane proteins.</title>
        <authorList>
            <person name="Brayton K.A."/>
            <person name="Kappmeyer L.S."/>
            <person name="Herndon D.R."/>
            <person name="Dark M.J."/>
            <person name="Tibbals D.L."/>
            <person name="Palmer G.H."/>
            <person name="McGuire T.C."/>
            <person name="Knowles D.P. Jr."/>
        </authorList>
    </citation>
    <scope>NUCLEOTIDE SEQUENCE [LARGE SCALE GENOMIC DNA]</scope>
    <source>
        <strain>St. Maries</strain>
    </source>
</reference>
<sequence>MLSVILKSSVRGLGKAGEIAKVRPGYARYLLADGKAVRATKDNVALLEQKLALIEEENSKKLAEAEGVAKSLGAERLIIVRQSSDDGKLFGSVTVRDVSKLLCDLGYDIQPRCVSFSEVIKRTGEYEINVELHADLVAALQLHVVRNESEAERVRLGIAKSEDQAAAAAEVEQAEDVAAAEQQDSSPVDDHADDADGATGGEGRDEGAGDASDGEEMPST</sequence>
<evidence type="ECO:0000255" key="1">
    <source>
        <dbReference type="HAMAP-Rule" id="MF_00503"/>
    </source>
</evidence>
<evidence type="ECO:0000256" key="2">
    <source>
        <dbReference type="SAM" id="MobiDB-lite"/>
    </source>
</evidence>
<evidence type="ECO:0000305" key="3"/>
<organism>
    <name type="scientific">Anaplasma marginale (strain St. Maries)</name>
    <dbReference type="NCBI Taxonomy" id="234826"/>
    <lineage>
        <taxon>Bacteria</taxon>
        <taxon>Pseudomonadati</taxon>
        <taxon>Pseudomonadota</taxon>
        <taxon>Alphaproteobacteria</taxon>
        <taxon>Rickettsiales</taxon>
        <taxon>Anaplasmataceae</taxon>
        <taxon>Anaplasma</taxon>
    </lineage>
</organism>